<proteinExistence type="inferred from homology"/>
<protein>
    <recommendedName>
        <fullName evidence="1">6-phospho-beta-galactosidase</fullName>
        <ecNumber evidence="1">3.2.1.85</ecNumber>
    </recommendedName>
    <alternativeName>
        <fullName evidence="1">Beta-D-phosphogalactoside galactohydrolase</fullName>
        <shortName evidence="1">PGALase</shortName>
    </alternativeName>
    <alternativeName>
        <fullName evidence="1">P-beta-Gal</fullName>
        <shortName evidence="1">PBG</shortName>
    </alternativeName>
</protein>
<keyword id="KW-0326">Glycosidase</keyword>
<keyword id="KW-0378">Hydrolase</keyword>
<accession>A6U3R9</accession>
<dbReference type="EC" id="3.2.1.85" evidence="1"/>
<dbReference type="EMBL" id="CP000736">
    <property type="protein sequence ID" value="ABR53087.1"/>
    <property type="molecule type" value="Genomic_DNA"/>
</dbReference>
<dbReference type="SMR" id="A6U3R9"/>
<dbReference type="CAZy" id="GH1">
    <property type="family name" value="Glycoside Hydrolase Family 1"/>
</dbReference>
<dbReference type="KEGG" id="sah:SaurJH1_2259"/>
<dbReference type="HOGENOM" id="CLU_001859_1_3_9"/>
<dbReference type="UniPathway" id="UPA00542">
    <property type="reaction ID" value="UER00605"/>
</dbReference>
<dbReference type="GO" id="GO:0005829">
    <property type="term" value="C:cytosol"/>
    <property type="evidence" value="ECO:0007669"/>
    <property type="project" value="TreeGrafter"/>
</dbReference>
<dbReference type="GO" id="GO:0033920">
    <property type="term" value="F:6-phospho-beta-galactosidase activity"/>
    <property type="evidence" value="ECO:0007669"/>
    <property type="project" value="UniProtKB-UniRule"/>
</dbReference>
<dbReference type="GO" id="GO:0008422">
    <property type="term" value="F:beta-glucosidase activity"/>
    <property type="evidence" value="ECO:0007669"/>
    <property type="project" value="TreeGrafter"/>
</dbReference>
<dbReference type="GO" id="GO:0019512">
    <property type="term" value="P:lactose catabolic process via tagatose-6-phosphate"/>
    <property type="evidence" value="ECO:0007669"/>
    <property type="project" value="InterPro"/>
</dbReference>
<dbReference type="FunFam" id="3.20.20.80:FF:000004">
    <property type="entry name" value="Beta-glucosidase 6-phospho-beta-glucosidase"/>
    <property type="match status" value="1"/>
</dbReference>
<dbReference type="Gene3D" id="3.20.20.80">
    <property type="entry name" value="Glycosidases"/>
    <property type="match status" value="1"/>
</dbReference>
<dbReference type="HAMAP" id="MF_01574">
    <property type="entry name" value="LacG"/>
    <property type="match status" value="1"/>
</dbReference>
<dbReference type="InterPro" id="IPR005928">
    <property type="entry name" value="6P-beta-galactosidase"/>
</dbReference>
<dbReference type="InterPro" id="IPR001360">
    <property type="entry name" value="Glyco_hydro_1"/>
</dbReference>
<dbReference type="InterPro" id="IPR018120">
    <property type="entry name" value="Glyco_hydro_1_AS"/>
</dbReference>
<dbReference type="InterPro" id="IPR033132">
    <property type="entry name" value="Glyco_hydro_1_N_CS"/>
</dbReference>
<dbReference type="InterPro" id="IPR017853">
    <property type="entry name" value="Glycoside_hydrolase_SF"/>
</dbReference>
<dbReference type="NCBIfam" id="TIGR01233">
    <property type="entry name" value="lacG"/>
    <property type="match status" value="1"/>
</dbReference>
<dbReference type="NCBIfam" id="NF010036">
    <property type="entry name" value="PRK13511.1"/>
    <property type="match status" value="1"/>
</dbReference>
<dbReference type="PANTHER" id="PTHR10353">
    <property type="entry name" value="GLYCOSYL HYDROLASE"/>
    <property type="match status" value="1"/>
</dbReference>
<dbReference type="PANTHER" id="PTHR10353:SF36">
    <property type="entry name" value="LP05116P"/>
    <property type="match status" value="1"/>
</dbReference>
<dbReference type="Pfam" id="PF00232">
    <property type="entry name" value="Glyco_hydro_1"/>
    <property type="match status" value="1"/>
</dbReference>
<dbReference type="PRINTS" id="PR00131">
    <property type="entry name" value="GLHYDRLASE1"/>
</dbReference>
<dbReference type="SUPFAM" id="SSF51445">
    <property type="entry name" value="(Trans)glycosidases"/>
    <property type="match status" value="1"/>
</dbReference>
<dbReference type="PROSITE" id="PS00572">
    <property type="entry name" value="GLYCOSYL_HYDROL_F1_1"/>
    <property type="match status" value="1"/>
</dbReference>
<dbReference type="PROSITE" id="PS00653">
    <property type="entry name" value="GLYCOSYL_HYDROL_F1_2"/>
    <property type="match status" value="1"/>
</dbReference>
<feature type="chain" id="PRO_1000087879" description="6-phospho-beta-galactosidase">
    <location>
        <begin position="1"/>
        <end position="470"/>
    </location>
</feature>
<feature type="active site" description="Proton donor" evidence="1">
    <location>
        <position position="160"/>
    </location>
</feature>
<feature type="active site" description="Nucleophile" evidence="1">
    <location>
        <position position="375"/>
    </location>
</feature>
<feature type="binding site" evidence="1">
    <location>
        <position position="19"/>
    </location>
    <ligand>
        <name>D-galactose 6-phosphate</name>
        <dbReference type="ChEBI" id="CHEBI:91004"/>
    </ligand>
</feature>
<feature type="binding site" evidence="1">
    <location>
        <position position="116"/>
    </location>
    <ligand>
        <name>D-galactose 6-phosphate</name>
        <dbReference type="ChEBI" id="CHEBI:91004"/>
    </ligand>
</feature>
<feature type="binding site" evidence="1">
    <location>
        <position position="159"/>
    </location>
    <ligand>
        <name>D-galactose 6-phosphate</name>
        <dbReference type="ChEBI" id="CHEBI:91004"/>
    </ligand>
</feature>
<feature type="binding site" evidence="1">
    <location>
        <position position="160"/>
    </location>
    <ligand>
        <name>D-galactose 6-phosphate</name>
        <dbReference type="ChEBI" id="CHEBI:91004"/>
    </ligand>
</feature>
<feature type="binding site" evidence="1">
    <location>
        <position position="297"/>
    </location>
    <ligand>
        <name>D-galactose 6-phosphate</name>
        <dbReference type="ChEBI" id="CHEBI:91004"/>
    </ligand>
</feature>
<feature type="binding site" evidence="1">
    <location>
        <position position="430"/>
    </location>
    <ligand>
        <name>D-galactose 6-phosphate</name>
        <dbReference type="ChEBI" id="CHEBI:91004"/>
    </ligand>
</feature>
<feature type="binding site" evidence="1">
    <location>
        <position position="431"/>
    </location>
    <ligand>
        <name>D-galactose 6-phosphate</name>
        <dbReference type="ChEBI" id="CHEBI:91004"/>
    </ligand>
</feature>
<feature type="binding site" evidence="1">
    <location>
        <position position="437"/>
    </location>
    <ligand>
        <name>D-galactose 6-phosphate</name>
        <dbReference type="ChEBI" id="CHEBI:91004"/>
    </ligand>
</feature>
<feature type="binding site" evidence="1">
    <location>
        <position position="439"/>
    </location>
    <ligand>
        <name>D-galactose 6-phosphate</name>
        <dbReference type="ChEBI" id="CHEBI:91004"/>
    </ligand>
</feature>
<name>LACG_STAA2</name>
<gene>
    <name evidence="1" type="primary">lacG</name>
    <name type="ordered locus">SaurJH1_2259</name>
</gene>
<comment type="catalytic activity">
    <reaction evidence="1">
        <text>a 6-phospho-beta-D-galactoside + H2O = D-galactose 6-phosphate + an alcohol</text>
        <dbReference type="Rhea" id="RHEA:24568"/>
        <dbReference type="ChEBI" id="CHEBI:15377"/>
        <dbReference type="ChEBI" id="CHEBI:30879"/>
        <dbReference type="ChEBI" id="CHEBI:58534"/>
        <dbReference type="ChEBI" id="CHEBI:91004"/>
        <dbReference type="EC" id="3.2.1.85"/>
    </reaction>
</comment>
<comment type="pathway">
    <text evidence="1">Carbohydrate metabolism; lactose degradation; D-galactose 6-phosphate and beta-D-glucose from lactose 6-phosphate: step 1/1.</text>
</comment>
<comment type="similarity">
    <text evidence="1">Belongs to the glycosyl hydrolase 1 family.</text>
</comment>
<sequence>MTKTLPEDFIFGGATAAYQAEGATNTDGKGRVAWDTYLEENYWYTAEPASDFYNRYPVDLELSEKFGVNGIRISIAWSRIFPNGYGEVNPKGVEYYHKLFAECHKRHVEPFVTLHHFDTPEVLHKDGDFLNRKTIDYFVDYAEYCFKEFPEVKYWTTFNEIGPIGDGQYLVGKFPPGIKYDFEKVFQSHHNMMVAHARAVKLFKDGGYQGEIGVVHALPTKYPFDPSNPEDVRAAELEDIIHNKFILDATYLGKYSRETMEGVQHILSVNGGKLNITDEDYAILDAAKDLNDFLGINYYMSDWMRGYDGESEITHNATGDKGGSKYQLKGVGQREFDVDVPRTDWDWMIYPQGLYDQIMRVVKDYPNYHKIYITENGLGYKDEFIESEKTVHDDARIDYVRQHLNVIADAIKDGANVKGYFIWSLMDVFSWSNGYEKRYGLFYVDFETQERYPKKSAYWYKELAETKEIK</sequence>
<organism>
    <name type="scientific">Staphylococcus aureus (strain JH1)</name>
    <dbReference type="NCBI Taxonomy" id="359787"/>
    <lineage>
        <taxon>Bacteria</taxon>
        <taxon>Bacillati</taxon>
        <taxon>Bacillota</taxon>
        <taxon>Bacilli</taxon>
        <taxon>Bacillales</taxon>
        <taxon>Staphylococcaceae</taxon>
        <taxon>Staphylococcus</taxon>
    </lineage>
</organism>
<reference key="1">
    <citation type="submission" date="2007-06" db="EMBL/GenBank/DDBJ databases">
        <title>Complete sequence of chromosome of Staphylococcus aureus subsp. aureus JH1.</title>
        <authorList>
            <consortium name="US DOE Joint Genome Institute"/>
            <person name="Copeland A."/>
            <person name="Lucas S."/>
            <person name="Lapidus A."/>
            <person name="Barry K."/>
            <person name="Detter J.C."/>
            <person name="Glavina del Rio T."/>
            <person name="Hammon N."/>
            <person name="Israni S."/>
            <person name="Dalin E."/>
            <person name="Tice H."/>
            <person name="Pitluck S."/>
            <person name="Chain P."/>
            <person name="Malfatti S."/>
            <person name="Shin M."/>
            <person name="Vergez L."/>
            <person name="Schmutz J."/>
            <person name="Larimer F."/>
            <person name="Land M."/>
            <person name="Hauser L."/>
            <person name="Kyrpides N."/>
            <person name="Ivanova N."/>
            <person name="Tomasz A."/>
            <person name="Richardson P."/>
        </authorList>
    </citation>
    <scope>NUCLEOTIDE SEQUENCE [LARGE SCALE GENOMIC DNA]</scope>
    <source>
        <strain>JH1</strain>
    </source>
</reference>
<evidence type="ECO:0000255" key="1">
    <source>
        <dbReference type="HAMAP-Rule" id="MF_01574"/>
    </source>
</evidence>